<keyword id="KW-0175">Coiled coil</keyword>
<keyword id="KW-0333">Golgi apparatus</keyword>
<keyword id="KW-0597">Phosphoprotein</keyword>
<keyword id="KW-1267">Proteomics identification</keyword>
<keyword id="KW-1185">Reference proteome</keyword>
<evidence type="ECO:0000250" key="1"/>
<evidence type="ECO:0000250" key="2">
    <source>
        <dbReference type="UniProtKB" id="Q5DTN8"/>
    </source>
</evidence>
<evidence type="ECO:0000255" key="3"/>
<evidence type="ECO:0000256" key="4">
    <source>
        <dbReference type="SAM" id="MobiDB-lite"/>
    </source>
</evidence>
<evidence type="ECO:0000269" key="5">
    <source>
    </source>
</evidence>
<evidence type="ECO:0000269" key="6">
    <source>
    </source>
</evidence>
<evidence type="ECO:0000305" key="7"/>
<dbReference type="EMBL" id="AL832756">
    <property type="protein sequence ID" value="CAH10388.1"/>
    <property type="molecule type" value="mRNA"/>
</dbReference>
<dbReference type="EMBL" id="AL512622">
    <property type="status" value="NOT_ANNOTATED_CDS"/>
    <property type="molecule type" value="Genomic_DNA"/>
</dbReference>
<dbReference type="EMBL" id="AL162274">
    <property type="status" value="NOT_ANNOTATED_CDS"/>
    <property type="molecule type" value="Genomic_DNA"/>
</dbReference>
<dbReference type="EMBL" id="AK126964">
    <property type="protein sequence ID" value="BAC86766.1"/>
    <property type="status" value="ALT_INIT"/>
    <property type="molecule type" value="mRNA"/>
</dbReference>
<dbReference type="CCDS" id="CCDS44494.1"/>
<dbReference type="RefSeq" id="NP_001098991.1">
    <property type="nucleotide sequence ID" value="NM_001105521.4"/>
</dbReference>
<dbReference type="RefSeq" id="NP_001310019.1">
    <property type="nucleotide sequence ID" value="NM_001323090.2"/>
</dbReference>
<dbReference type="RefSeq" id="NP_001378972.1">
    <property type="nucleotide sequence ID" value="NM_001392043.1"/>
</dbReference>
<dbReference type="RefSeq" id="NP_001378973.1">
    <property type="nucleotide sequence ID" value="NM_001392044.1"/>
</dbReference>
<dbReference type="RefSeq" id="NP_001378974.1">
    <property type="nucleotide sequence ID" value="NM_001392045.1"/>
</dbReference>
<dbReference type="RefSeq" id="NP_001378975.1">
    <property type="nucleotide sequence ID" value="NM_001392046.1"/>
</dbReference>
<dbReference type="RefSeq" id="NP_001378976.1">
    <property type="nucleotide sequence ID" value="NM_001392047.1"/>
</dbReference>
<dbReference type="RefSeq" id="XP_016871585.1">
    <property type="nucleotide sequence ID" value="XM_017016096.1"/>
</dbReference>
<dbReference type="SMR" id="Q5VZ66"/>
<dbReference type="BioGRID" id="129428">
    <property type="interactions" value="4"/>
</dbReference>
<dbReference type="FunCoup" id="Q5VZ66">
    <property type="interactions" value="2"/>
</dbReference>
<dbReference type="IntAct" id="Q5VZ66">
    <property type="interactions" value="5"/>
</dbReference>
<dbReference type="STRING" id="9606.ENSP00000499375"/>
<dbReference type="iPTMnet" id="Q5VZ66"/>
<dbReference type="PhosphoSitePlus" id="Q5VZ66"/>
<dbReference type="BioMuta" id="JAKMIP3"/>
<dbReference type="DMDM" id="172045962"/>
<dbReference type="jPOST" id="Q5VZ66"/>
<dbReference type="MassIVE" id="Q5VZ66"/>
<dbReference type="PaxDb" id="9606-ENSP00000298622"/>
<dbReference type="PeptideAtlas" id="Q5VZ66"/>
<dbReference type="Antibodypedia" id="19297">
    <property type="antibodies" value="20 antibodies from 10 providers"/>
</dbReference>
<dbReference type="DNASU" id="282973"/>
<dbReference type="Ensembl" id="ENST00000298622.9">
    <property type="protein sequence ID" value="ENSP00000298622.4"/>
    <property type="gene ID" value="ENSG00000188385.13"/>
</dbReference>
<dbReference type="Ensembl" id="ENST00000664697.1">
    <property type="protein sequence ID" value="ENSP00000499375.1"/>
    <property type="gene ID" value="ENSG00000188385.13"/>
</dbReference>
<dbReference type="Ensembl" id="ENST00000668452.1">
    <property type="protein sequence ID" value="ENSP00000499753.1"/>
    <property type="gene ID" value="ENSG00000188385.13"/>
</dbReference>
<dbReference type="GeneID" id="282973"/>
<dbReference type="KEGG" id="hsa:282973"/>
<dbReference type="UCSC" id="uc001lkx.5">
    <property type="organism name" value="human"/>
</dbReference>
<dbReference type="AGR" id="HGNC:23523"/>
<dbReference type="CTD" id="282973"/>
<dbReference type="DisGeNET" id="282973"/>
<dbReference type="GeneCards" id="JAKMIP3"/>
<dbReference type="HGNC" id="HGNC:23523">
    <property type="gene designation" value="JAKMIP3"/>
</dbReference>
<dbReference type="HPA" id="ENSG00000188385">
    <property type="expression patterns" value="Tissue enhanced (brain, pituitary gland)"/>
</dbReference>
<dbReference type="MIM" id="611198">
    <property type="type" value="gene"/>
</dbReference>
<dbReference type="neXtProt" id="NX_Q5VZ66"/>
<dbReference type="OpenTargets" id="ENSG00000188385"/>
<dbReference type="VEuPathDB" id="HostDB:ENSG00000188385"/>
<dbReference type="eggNOG" id="ENOG502QRTR">
    <property type="taxonomic scope" value="Eukaryota"/>
</dbReference>
<dbReference type="GeneTree" id="ENSGT00940000153713"/>
<dbReference type="HOGENOM" id="CLU_020294_1_0_1"/>
<dbReference type="InParanoid" id="Q5VZ66"/>
<dbReference type="OrthoDB" id="6424487at2759"/>
<dbReference type="PAN-GO" id="Q5VZ66">
    <property type="GO annotations" value="0 GO annotations based on evolutionary models"/>
</dbReference>
<dbReference type="PhylomeDB" id="Q5VZ66"/>
<dbReference type="TreeFam" id="TF331900"/>
<dbReference type="PathwayCommons" id="Q5VZ66"/>
<dbReference type="SignaLink" id="Q5VZ66"/>
<dbReference type="BioGRID-ORCS" id="282973">
    <property type="hits" value="15 hits in 1141 CRISPR screens"/>
</dbReference>
<dbReference type="ChiTaRS" id="JAKMIP3">
    <property type="organism name" value="human"/>
</dbReference>
<dbReference type="GenomeRNAi" id="282973"/>
<dbReference type="Pharos" id="Q5VZ66">
    <property type="development level" value="Tdark"/>
</dbReference>
<dbReference type="PRO" id="PR:Q5VZ66"/>
<dbReference type="Proteomes" id="UP000005640">
    <property type="component" value="Chromosome 10"/>
</dbReference>
<dbReference type="RNAct" id="Q5VZ66">
    <property type="molecule type" value="protein"/>
</dbReference>
<dbReference type="Bgee" id="ENSG00000188385">
    <property type="expression patterns" value="Expressed in C1 segment of cervical spinal cord and 116 other cell types or tissues"/>
</dbReference>
<dbReference type="ExpressionAtlas" id="Q5VZ66">
    <property type="expression patterns" value="baseline and differential"/>
</dbReference>
<dbReference type="GO" id="GO:0005794">
    <property type="term" value="C:Golgi apparatus"/>
    <property type="evidence" value="ECO:0007669"/>
    <property type="project" value="UniProtKB-SubCell"/>
</dbReference>
<dbReference type="GO" id="GO:0019900">
    <property type="term" value="F:kinase binding"/>
    <property type="evidence" value="ECO:0007669"/>
    <property type="project" value="InterPro"/>
</dbReference>
<dbReference type="GO" id="GO:0008017">
    <property type="term" value="F:microtubule binding"/>
    <property type="evidence" value="ECO:0007669"/>
    <property type="project" value="InterPro"/>
</dbReference>
<dbReference type="InterPro" id="IPR024836">
    <property type="entry name" value="JAKMIP"/>
</dbReference>
<dbReference type="InterPro" id="IPR031994">
    <property type="entry name" value="JAKMIP_C"/>
</dbReference>
<dbReference type="PANTHER" id="PTHR18935">
    <property type="entry name" value="GOLGIN SUBFAMILY A MEMBER 4-LIKE ISOFORM X1"/>
    <property type="match status" value="1"/>
</dbReference>
<dbReference type="PANTHER" id="PTHR18935:SF9">
    <property type="entry name" value="JANUS KINASE AND MICROTUBULE-INTERACTING PROTEIN 3"/>
    <property type="match status" value="1"/>
</dbReference>
<dbReference type="Pfam" id="PF16034">
    <property type="entry name" value="JAKMIP_CC3"/>
    <property type="match status" value="1"/>
</dbReference>
<comment type="subcellular location">
    <subcellularLocation>
        <location evidence="1">Golgi apparatus</location>
    </subcellularLocation>
</comment>
<comment type="tissue specificity">
    <text evidence="6">Specifically expressed in the CNS and endocrine tissues. Also detected in other tissues including heart, testis and prostate.</text>
</comment>
<comment type="similarity">
    <text evidence="7">Belongs to the JAKMIP family.</text>
</comment>
<comment type="sequence caution" evidence="7">
    <conflict type="erroneous initiation">
        <sequence resource="EMBL-CDS" id="BAC86766"/>
    </conflict>
    <text>Truncated N-terminus.</text>
</comment>
<sequence length="844" mass="98529">MSKRGMSSRAKGDKAEALAALQAANEDLRAKLTDIQIELQQEKSKVSKVEREKNQELRQVREHEQHKTAVLLTELKTKLHEEKMKELQAVRETLLRQHEAELLRVIKIKDNENQRLQALLSALRDGGPEKVKTVLLSEAKEEAKKGFEVEKVKMQQEISELKGAKRQVEEALTLVIQADKIKAAEIRSVYHLHQEEITRIKKECEREIRRLMEEIKFKDRAVFVLERELGVQAGHAQRLQLQKEALDEQLSQVREADRHPGSPRRELPHAAGAGDASDHSGSPEQQLDEKDARRFQLKIAELSAIIRKLEDRNALLSEERNELLKRVREAESQYKPLLDKNKRLSRKNEDLSHALRRMENKLKFVTQENIEMRQRAGIIRRPSSLNDLDQSQDEREVDFLKLQIVEQQNLIDELSKTLETAGYVKSVLERDKLLRFRKQRKKMAKLPKPVVVETFFGYDEEASLESDGSSVSYQTDRTDQTPCTPDDDLEEGMAKEETELRFRQLTMEYQALQRAYALLQEQVGGTLDAEREVKTREQLQAEVQRAQARIEDLEKALAEQGQDMKWIEEKQALYRRNQELVEKIKQMETEEARLRHEVQDARDQNELLEFRILELEERERKSPAISFHHTPFVDGKSPLQVYCEAEGVTDIVVAELMKKLDILGDNANLTNEEQVVVIQARTVLTLAEKWLQQIEETEAALQRKMVDLESEKELFSKQKGYLDEELDYRKQALDQANKHILELEAMLYDALQQEAGAKVAELLSEEEREKLKVAVEQWKRQVMSELRERDAQILRERMELLQLAQQRIKELEERIEAQKRQIKELEEKFLFLFLFFSLAFILWS</sequence>
<feature type="chain" id="PRO_0000323011" description="Janus kinase and microtubule-interacting protein 3">
    <location>
        <begin position="1"/>
        <end position="844"/>
    </location>
</feature>
<feature type="region of interest" description="Disordered" evidence="4">
    <location>
        <begin position="250"/>
        <end position="290"/>
    </location>
</feature>
<feature type="region of interest" description="Disordered" evidence="4">
    <location>
        <begin position="466"/>
        <end position="489"/>
    </location>
</feature>
<feature type="coiled-coil region" evidence="3">
    <location>
        <begin position="8"/>
        <end position="258"/>
    </location>
</feature>
<feature type="coiled-coil region" evidence="3">
    <location>
        <begin position="289"/>
        <end position="421"/>
    </location>
</feature>
<feature type="coiled-coil region" evidence="3">
    <location>
        <begin position="493"/>
        <end position="621"/>
    </location>
</feature>
<feature type="coiled-coil region" evidence="3">
    <location>
        <begin position="683"/>
        <end position="834"/>
    </location>
</feature>
<feature type="compositionally biased region" description="Basic and acidic residues" evidence="4">
    <location>
        <begin position="254"/>
        <end position="268"/>
    </location>
</feature>
<feature type="compositionally biased region" description="Low complexity" evidence="4">
    <location>
        <begin position="269"/>
        <end position="282"/>
    </location>
</feature>
<feature type="compositionally biased region" description="Polar residues" evidence="4">
    <location>
        <begin position="466"/>
        <end position="483"/>
    </location>
</feature>
<feature type="modified residue" description="Phosphoserine" evidence="2">
    <location>
        <position position="384"/>
    </location>
</feature>
<feature type="sequence variant" id="VAR_054016" description="In dbSNP:rs11592585.">
    <original>M</original>
    <variation>V</variation>
    <location>
        <position position="493"/>
    </location>
</feature>
<feature type="sequence variant" id="VAR_039473" description="In a breast cancer sample; somatic mutation." evidence="5">
    <original>R</original>
    <variation>G</variation>
    <location>
        <position position="795"/>
    </location>
</feature>
<gene>
    <name type="primary">JAKMIP3</name>
    <name type="synonym">C10orf14</name>
    <name type="synonym">C10orf39</name>
    <name type="synonym">JAMIP3</name>
    <name type="synonym">NECC2</name>
</gene>
<organism>
    <name type="scientific">Homo sapiens</name>
    <name type="common">Human</name>
    <dbReference type="NCBI Taxonomy" id="9606"/>
    <lineage>
        <taxon>Eukaryota</taxon>
        <taxon>Metazoa</taxon>
        <taxon>Chordata</taxon>
        <taxon>Craniata</taxon>
        <taxon>Vertebrata</taxon>
        <taxon>Euteleostomi</taxon>
        <taxon>Mammalia</taxon>
        <taxon>Eutheria</taxon>
        <taxon>Euarchontoglires</taxon>
        <taxon>Primates</taxon>
        <taxon>Haplorrhini</taxon>
        <taxon>Catarrhini</taxon>
        <taxon>Hominidae</taxon>
        <taxon>Homo</taxon>
    </lineage>
</organism>
<proteinExistence type="evidence at protein level"/>
<protein>
    <recommendedName>
        <fullName>Janus kinase and microtubule-interacting protein 3</fullName>
    </recommendedName>
    <alternativeName>
        <fullName>Neuroendocrine long coiled-coil protein 2</fullName>
    </alternativeName>
</protein>
<name>JKIP3_HUMAN</name>
<accession>Q5VZ66</accession>
<accession>A6PW00</accession>
<accession>Q69YM6</accession>
<accession>Q6ZT29</accession>
<reference key="1">
    <citation type="journal article" date="2004" name="Nature">
        <title>The DNA sequence and comparative analysis of human chromosome 10.</title>
        <authorList>
            <person name="Deloukas P."/>
            <person name="Earthrowl M.E."/>
            <person name="Grafham D.V."/>
            <person name="Rubenfield M."/>
            <person name="French L."/>
            <person name="Steward C.A."/>
            <person name="Sims S.K."/>
            <person name="Jones M.C."/>
            <person name="Searle S."/>
            <person name="Scott C."/>
            <person name="Howe K."/>
            <person name="Hunt S.E."/>
            <person name="Andrews T.D."/>
            <person name="Gilbert J.G.R."/>
            <person name="Swarbreck D."/>
            <person name="Ashurst J.L."/>
            <person name="Taylor A."/>
            <person name="Battles J."/>
            <person name="Bird C.P."/>
            <person name="Ainscough R."/>
            <person name="Almeida J.P."/>
            <person name="Ashwell R.I.S."/>
            <person name="Ambrose K.D."/>
            <person name="Babbage A.K."/>
            <person name="Bagguley C.L."/>
            <person name="Bailey J."/>
            <person name="Banerjee R."/>
            <person name="Bates K."/>
            <person name="Beasley H."/>
            <person name="Bray-Allen S."/>
            <person name="Brown A.J."/>
            <person name="Brown J.Y."/>
            <person name="Burford D.C."/>
            <person name="Burrill W."/>
            <person name="Burton J."/>
            <person name="Cahill P."/>
            <person name="Camire D."/>
            <person name="Carter N.P."/>
            <person name="Chapman J.C."/>
            <person name="Clark S.Y."/>
            <person name="Clarke G."/>
            <person name="Clee C.M."/>
            <person name="Clegg S."/>
            <person name="Corby N."/>
            <person name="Coulson A."/>
            <person name="Dhami P."/>
            <person name="Dutta I."/>
            <person name="Dunn M."/>
            <person name="Faulkner L."/>
            <person name="Frankish A."/>
            <person name="Frankland J.A."/>
            <person name="Garner P."/>
            <person name="Garnett J."/>
            <person name="Gribble S."/>
            <person name="Griffiths C."/>
            <person name="Grocock R."/>
            <person name="Gustafson E."/>
            <person name="Hammond S."/>
            <person name="Harley J.L."/>
            <person name="Hart E."/>
            <person name="Heath P.D."/>
            <person name="Ho T.P."/>
            <person name="Hopkins B."/>
            <person name="Horne J."/>
            <person name="Howden P.J."/>
            <person name="Huckle E."/>
            <person name="Hynds C."/>
            <person name="Johnson C."/>
            <person name="Johnson D."/>
            <person name="Kana A."/>
            <person name="Kay M."/>
            <person name="Kimberley A.M."/>
            <person name="Kershaw J.K."/>
            <person name="Kokkinaki M."/>
            <person name="Laird G.K."/>
            <person name="Lawlor S."/>
            <person name="Lee H.M."/>
            <person name="Leongamornlert D.A."/>
            <person name="Laird G."/>
            <person name="Lloyd C."/>
            <person name="Lloyd D.M."/>
            <person name="Loveland J."/>
            <person name="Lovell J."/>
            <person name="McLaren S."/>
            <person name="McLay K.E."/>
            <person name="McMurray A."/>
            <person name="Mashreghi-Mohammadi M."/>
            <person name="Matthews L."/>
            <person name="Milne S."/>
            <person name="Nickerson T."/>
            <person name="Nguyen M."/>
            <person name="Overton-Larty E."/>
            <person name="Palmer S.A."/>
            <person name="Pearce A.V."/>
            <person name="Peck A.I."/>
            <person name="Pelan S."/>
            <person name="Phillimore B."/>
            <person name="Porter K."/>
            <person name="Rice C.M."/>
            <person name="Rogosin A."/>
            <person name="Ross M.T."/>
            <person name="Sarafidou T."/>
            <person name="Sehra H.K."/>
            <person name="Shownkeen R."/>
            <person name="Skuce C.D."/>
            <person name="Smith M."/>
            <person name="Standring L."/>
            <person name="Sycamore N."/>
            <person name="Tester J."/>
            <person name="Thorpe A."/>
            <person name="Torcasso W."/>
            <person name="Tracey A."/>
            <person name="Tromans A."/>
            <person name="Tsolas J."/>
            <person name="Wall M."/>
            <person name="Walsh J."/>
            <person name="Wang H."/>
            <person name="Weinstock K."/>
            <person name="West A.P."/>
            <person name="Willey D.L."/>
            <person name="Whitehead S.L."/>
            <person name="Wilming L."/>
            <person name="Wray P.W."/>
            <person name="Young L."/>
            <person name="Chen Y."/>
            <person name="Lovering R.C."/>
            <person name="Moschonas N.K."/>
            <person name="Siebert R."/>
            <person name="Fechtel K."/>
            <person name="Bentley D."/>
            <person name="Durbin R.M."/>
            <person name="Hubbard T."/>
            <person name="Doucette-Stamm L."/>
            <person name="Beck S."/>
            <person name="Smith D.R."/>
            <person name="Rogers J."/>
        </authorList>
    </citation>
    <scope>NUCLEOTIDE SEQUENCE [LARGE SCALE GENOMIC DNA]</scope>
</reference>
<reference key="2">
    <citation type="journal article" date="2004" name="Nat. Genet.">
        <title>Complete sequencing and characterization of 21,243 full-length human cDNAs.</title>
        <authorList>
            <person name="Ota T."/>
            <person name="Suzuki Y."/>
            <person name="Nishikawa T."/>
            <person name="Otsuki T."/>
            <person name="Sugiyama T."/>
            <person name="Irie R."/>
            <person name="Wakamatsu A."/>
            <person name="Hayashi K."/>
            <person name="Sato H."/>
            <person name="Nagai K."/>
            <person name="Kimura K."/>
            <person name="Makita H."/>
            <person name="Sekine M."/>
            <person name="Obayashi M."/>
            <person name="Nishi T."/>
            <person name="Shibahara T."/>
            <person name="Tanaka T."/>
            <person name="Ishii S."/>
            <person name="Yamamoto J."/>
            <person name="Saito K."/>
            <person name="Kawai Y."/>
            <person name="Isono Y."/>
            <person name="Nakamura Y."/>
            <person name="Nagahari K."/>
            <person name="Murakami K."/>
            <person name="Yasuda T."/>
            <person name="Iwayanagi T."/>
            <person name="Wagatsuma M."/>
            <person name="Shiratori A."/>
            <person name="Sudo H."/>
            <person name="Hosoiri T."/>
            <person name="Kaku Y."/>
            <person name="Kodaira H."/>
            <person name="Kondo H."/>
            <person name="Sugawara M."/>
            <person name="Takahashi M."/>
            <person name="Kanda K."/>
            <person name="Yokoi T."/>
            <person name="Furuya T."/>
            <person name="Kikkawa E."/>
            <person name="Omura Y."/>
            <person name="Abe K."/>
            <person name="Kamihara K."/>
            <person name="Katsuta N."/>
            <person name="Sato K."/>
            <person name="Tanikawa M."/>
            <person name="Yamazaki M."/>
            <person name="Ninomiya K."/>
            <person name="Ishibashi T."/>
            <person name="Yamashita H."/>
            <person name="Murakawa K."/>
            <person name="Fujimori K."/>
            <person name="Tanai H."/>
            <person name="Kimata M."/>
            <person name="Watanabe M."/>
            <person name="Hiraoka S."/>
            <person name="Chiba Y."/>
            <person name="Ishida S."/>
            <person name="Ono Y."/>
            <person name="Takiguchi S."/>
            <person name="Watanabe S."/>
            <person name="Yosida M."/>
            <person name="Hotuta T."/>
            <person name="Kusano J."/>
            <person name="Kanehori K."/>
            <person name="Takahashi-Fujii A."/>
            <person name="Hara H."/>
            <person name="Tanase T.-O."/>
            <person name="Nomura Y."/>
            <person name="Togiya S."/>
            <person name="Komai F."/>
            <person name="Hara R."/>
            <person name="Takeuchi K."/>
            <person name="Arita M."/>
            <person name="Imose N."/>
            <person name="Musashino K."/>
            <person name="Yuuki H."/>
            <person name="Oshima A."/>
            <person name="Sasaki N."/>
            <person name="Aotsuka S."/>
            <person name="Yoshikawa Y."/>
            <person name="Matsunawa H."/>
            <person name="Ichihara T."/>
            <person name="Shiohata N."/>
            <person name="Sano S."/>
            <person name="Moriya S."/>
            <person name="Momiyama H."/>
            <person name="Satoh N."/>
            <person name="Takami S."/>
            <person name="Terashima Y."/>
            <person name="Suzuki O."/>
            <person name="Nakagawa S."/>
            <person name="Senoh A."/>
            <person name="Mizoguchi H."/>
            <person name="Goto Y."/>
            <person name="Shimizu F."/>
            <person name="Wakebe H."/>
            <person name="Hishigaki H."/>
            <person name="Watanabe T."/>
            <person name="Sugiyama A."/>
            <person name="Takemoto M."/>
            <person name="Kawakami B."/>
            <person name="Yamazaki M."/>
            <person name="Watanabe K."/>
            <person name="Kumagai A."/>
            <person name="Itakura S."/>
            <person name="Fukuzumi Y."/>
            <person name="Fujimori Y."/>
            <person name="Komiyama M."/>
            <person name="Tashiro H."/>
            <person name="Tanigami A."/>
            <person name="Fujiwara T."/>
            <person name="Ono T."/>
            <person name="Yamada K."/>
            <person name="Fujii Y."/>
            <person name="Ozaki K."/>
            <person name="Hirao M."/>
            <person name="Ohmori Y."/>
            <person name="Kawabata A."/>
            <person name="Hikiji T."/>
            <person name="Kobatake N."/>
            <person name="Inagaki H."/>
            <person name="Ikema Y."/>
            <person name="Okamoto S."/>
            <person name="Okitani R."/>
            <person name="Kawakami T."/>
            <person name="Noguchi S."/>
            <person name="Itoh T."/>
            <person name="Shigeta K."/>
            <person name="Senba T."/>
            <person name="Matsumura K."/>
            <person name="Nakajima Y."/>
            <person name="Mizuno T."/>
            <person name="Morinaga M."/>
            <person name="Sasaki M."/>
            <person name="Togashi T."/>
            <person name="Oyama M."/>
            <person name="Hata H."/>
            <person name="Watanabe M."/>
            <person name="Komatsu T."/>
            <person name="Mizushima-Sugano J."/>
            <person name="Satoh T."/>
            <person name="Shirai Y."/>
            <person name="Takahashi Y."/>
            <person name="Nakagawa K."/>
            <person name="Okumura K."/>
            <person name="Nagase T."/>
            <person name="Nomura N."/>
            <person name="Kikuchi H."/>
            <person name="Masuho Y."/>
            <person name="Yamashita R."/>
            <person name="Nakai K."/>
            <person name="Yada T."/>
            <person name="Nakamura Y."/>
            <person name="Ohara O."/>
            <person name="Isogai T."/>
            <person name="Sugano S."/>
        </authorList>
    </citation>
    <scope>NUCLEOTIDE SEQUENCE [LARGE SCALE MRNA] OF 495-844</scope>
    <source>
        <tissue>Brain</tissue>
    </source>
</reference>
<reference key="3">
    <citation type="journal article" date="2007" name="BMC Genomics">
        <title>The full-ORF clone resource of the German cDNA consortium.</title>
        <authorList>
            <person name="Bechtel S."/>
            <person name="Rosenfelder H."/>
            <person name="Duda A."/>
            <person name="Schmidt C.P."/>
            <person name="Ernst U."/>
            <person name="Wellenreuther R."/>
            <person name="Mehrle A."/>
            <person name="Schuster C."/>
            <person name="Bahr A."/>
            <person name="Bloecker H."/>
            <person name="Heubner D."/>
            <person name="Hoerlein A."/>
            <person name="Michel G."/>
            <person name="Wedler H."/>
            <person name="Koehrer K."/>
            <person name="Ottenwaelder B."/>
            <person name="Poustka A."/>
            <person name="Wiemann S."/>
            <person name="Schupp I."/>
        </authorList>
    </citation>
    <scope>NUCLEOTIDE SEQUENCE [LARGE SCALE MRNA] OF 535-828</scope>
    <source>
        <tissue>Testis</tissue>
    </source>
</reference>
<reference key="4">
    <citation type="journal article" date="2007" name="FEBS Lett.">
        <title>Identification and characterization of two novel (neuro)endocrine long coiled-coil proteins.</title>
        <authorList>
            <person name="Cruz-Garcia D."/>
            <person name="Vazquez-Martinez R."/>
            <person name="Peinado J.R."/>
            <person name="Anouar Y."/>
            <person name="Tonon M.C."/>
            <person name="Vaudry H."/>
            <person name="Castano J.P."/>
            <person name="Malagon M.M."/>
        </authorList>
    </citation>
    <scope>TISSUE SPECIFICITY</scope>
</reference>
<reference key="5">
    <citation type="journal article" date="2006" name="Science">
        <title>The consensus coding sequences of human breast and colorectal cancers.</title>
        <authorList>
            <person name="Sjoeblom T."/>
            <person name="Jones S."/>
            <person name="Wood L.D."/>
            <person name="Parsons D.W."/>
            <person name="Lin J."/>
            <person name="Barber T.D."/>
            <person name="Mandelker D."/>
            <person name="Leary R.J."/>
            <person name="Ptak J."/>
            <person name="Silliman N."/>
            <person name="Szabo S."/>
            <person name="Buckhaults P."/>
            <person name="Farrell C."/>
            <person name="Meeh P."/>
            <person name="Markowitz S.D."/>
            <person name="Willis J."/>
            <person name="Dawson D."/>
            <person name="Willson J.K.V."/>
            <person name="Gazdar A.F."/>
            <person name="Hartigan J."/>
            <person name="Wu L."/>
            <person name="Liu C."/>
            <person name="Parmigiani G."/>
            <person name="Park B.H."/>
            <person name="Bachman K.E."/>
            <person name="Papadopoulos N."/>
            <person name="Vogelstein B."/>
            <person name="Kinzler K.W."/>
            <person name="Velculescu V.E."/>
        </authorList>
    </citation>
    <scope>VARIANT [LARGE SCALE ANALYSIS] GLY-795</scope>
</reference>